<gene>
    <name evidence="11" type="primary">Poglut1</name>
    <name type="synonym">Clp46</name>
    <name type="synonym">Ktelc1</name>
</gene>
<organism>
    <name type="scientific">Mus musculus</name>
    <name type="common">Mouse</name>
    <dbReference type="NCBI Taxonomy" id="10090"/>
    <lineage>
        <taxon>Eukaryota</taxon>
        <taxon>Metazoa</taxon>
        <taxon>Chordata</taxon>
        <taxon>Craniata</taxon>
        <taxon>Vertebrata</taxon>
        <taxon>Euteleostomi</taxon>
        <taxon>Mammalia</taxon>
        <taxon>Eutheria</taxon>
        <taxon>Euarchontoglires</taxon>
        <taxon>Glires</taxon>
        <taxon>Rodentia</taxon>
        <taxon>Myomorpha</taxon>
        <taxon>Muroidea</taxon>
        <taxon>Muridae</taxon>
        <taxon>Murinae</taxon>
        <taxon>Mus</taxon>
        <taxon>Mus</taxon>
    </lineage>
</organism>
<evidence type="ECO:0000250" key="1">
    <source>
        <dbReference type="UniProtKB" id="Q8NBL1"/>
    </source>
</evidence>
<evidence type="ECO:0000250" key="2">
    <source>
        <dbReference type="UniProtKB" id="Q8T045"/>
    </source>
</evidence>
<evidence type="ECO:0000255" key="3"/>
<evidence type="ECO:0000255" key="4">
    <source>
        <dbReference type="PROSITE-ProRule" id="PRU10138"/>
    </source>
</evidence>
<evidence type="ECO:0000269" key="5">
    <source>
    </source>
</evidence>
<evidence type="ECO:0000269" key="6">
    <source>
    </source>
</evidence>
<evidence type="ECO:0000269" key="7">
    <source>
    </source>
</evidence>
<evidence type="ECO:0000303" key="8">
    <source>
    </source>
</evidence>
<evidence type="ECO:0000303" key="9">
    <source>
    </source>
</evidence>
<evidence type="ECO:0000305" key="10"/>
<evidence type="ECO:0000312" key="11">
    <source>
        <dbReference type="MGI" id="MGI:2444232"/>
    </source>
</evidence>
<comment type="function">
    <text evidence="1 6 7">Dual specificity glycosyltransferase that catalyzes the transfer of glucose and xylose from UDP-glucose and UDP-xylose, respectively, to a serine residue found in the consensus sequence of C-X-S-X-P-C (PubMed:21949356, PubMed:26496195). Specifically targets extracellular EGF repeats of protein such as CRB2, F7, F9 and NOTCH2 (PubMed:21949356, PubMed:26496195). Acts as a positive regulator of Notch signaling by mediating O-glucosylation of Notch, leading to regulate muscle development (By similarity). Notch glucosylation does not affect Notch ligand binding (By similarity). Required during early development to promote gastrulation: acts by mediating O-glucosylation of CRB2, which is required for CRB2 localization to the cell membrane (PubMed:26496195).</text>
</comment>
<comment type="catalytic activity">
    <reaction evidence="6">
        <text>L-seryl-[EGF-like domain protein] + UDP-alpha-D-xylose = 3-O-(beta-D-xylosyl)-L-seryl-[EGF-like domain protein] + UDP + H(+)</text>
        <dbReference type="Rhea" id="RHEA:62016"/>
        <dbReference type="Rhea" id="RHEA-COMP:16010"/>
        <dbReference type="Rhea" id="RHEA-COMP:16011"/>
        <dbReference type="ChEBI" id="CHEBI:15378"/>
        <dbReference type="ChEBI" id="CHEBI:29999"/>
        <dbReference type="ChEBI" id="CHEBI:57632"/>
        <dbReference type="ChEBI" id="CHEBI:58223"/>
        <dbReference type="ChEBI" id="CHEBI:132085"/>
        <dbReference type="EC" id="2.4.2.63"/>
    </reaction>
</comment>
<comment type="catalytic activity">
    <reaction evidence="6 7">
        <text>L-seryl-[EGF-like domain protein] + UDP-alpha-D-glucose = 3-O-(beta-D-glucosyl)-L-seryl-[EGF-like domain protein] + UDP + H(+)</text>
        <dbReference type="Rhea" id="RHEA:58116"/>
        <dbReference type="Rhea" id="RHEA-COMP:14610"/>
        <dbReference type="Rhea" id="RHEA-COMP:16010"/>
        <dbReference type="ChEBI" id="CHEBI:15378"/>
        <dbReference type="ChEBI" id="CHEBI:29999"/>
        <dbReference type="ChEBI" id="CHEBI:58223"/>
        <dbReference type="ChEBI" id="CHEBI:58885"/>
        <dbReference type="ChEBI" id="CHEBI:140576"/>
        <dbReference type="EC" id="2.4.1.376"/>
    </reaction>
</comment>
<comment type="pathway">
    <text evidence="6 7">Protein modification; protein glycosylation.</text>
</comment>
<comment type="subcellular location">
    <subcellularLocation>
        <location evidence="1">Endoplasmic reticulum lumen</location>
    </subcellularLocation>
</comment>
<comment type="tissue specificity">
    <text evidence="5 7">Widely expressed in newborn and adult tissues (at protein level).</text>
</comment>
<comment type="disruption phenotype">
    <text evidence="5 7">Mutant embryos die at or before 9.5 dpc. At 7.0 to 7.5 dpc, they cannot be morphologically distinguished from wild-type littermates (PubMed:21490058, PubMed:26496195). At 8.0 dpc, mutant embryos exhibit an abnormally expanded neural plate that does not fold properly, absence of heart rudiments and posterior axis truncation (PubMed:21490058). Defects are caused by a deficit of mesoderm caused by impaired gastrulation.</text>
</comment>
<comment type="similarity">
    <text evidence="10">Belongs to the glycosyltransferase 90 family.</text>
</comment>
<keyword id="KW-0217">Developmental protein</keyword>
<keyword id="KW-1015">Disulfide bond</keyword>
<keyword id="KW-0256">Endoplasmic reticulum</keyword>
<keyword id="KW-0306">Gastrulation</keyword>
<keyword id="KW-0325">Glycoprotein</keyword>
<keyword id="KW-0328">Glycosyltransferase</keyword>
<keyword id="KW-1185">Reference proteome</keyword>
<keyword id="KW-0732">Signal</keyword>
<keyword id="KW-0808">Transferase</keyword>
<feature type="signal peptide" evidence="3">
    <location>
        <begin position="1"/>
        <end position="23"/>
    </location>
</feature>
<feature type="chain" id="PRO_0000246686" description="Protein O-glucosyltransferase 1">
    <location>
        <begin position="24"/>
        <end position="392"/>
    </location>
</feature>
<feature type="region of interest" description="Interaction with the consensus sequence C-X-S-X-[PA]-C in peptide substrates" evidence="1">
    <location>
        <begin position="103"/>
        <end position="107"/>
    </location>
</feature>
<feature type="region of interest" description="Interaction with the consensus sequence C-X-S-X-[PA]-C in peptide substrates" evidence="1">
    <location>
        <begin position="172"/>
        <end position="178"/>
    </location>
</feature>
<feature type="short sequence motif" description="Prevents secretion from ER" evidence="4">
    <location>
        <begin position="389"/>
        <end position="392"/>
    </location>
</feature>
<feature type="active site" description="Proton donor/acceptor" evidence="2">
    <location>
        <position position="133"/>
    </location>
</feature>
<feature type="binding site" evidence="1">
    <location>
        <position position="177"/>
    </location>
    <ligand>
        <name>UDP-alpha-D-glucose</name>
        <dbReference type="ChEBI" id="CHEBI:58885"/>
    </ligand>
</feature>
<feature type="binding site" evidence="1">
    <location>
        <position position="212"/>
    </location>
    <ligand>
        <name>UDP-alpha-D-glucose</name>
        <dbReference type="ChEBI" id="CHEBI:58885"/>
    </ligand>
</feature>
<feature type="binding site" evidence="1">
    <location>
        <position position="218"/>
    </location>
    <ligand>
        <name>UDP-alpha-D-glucose</name>
        <dbReference type="ChEBI" id="CHEBI:58885"/>
    </ligand>
</feature>
<feature type="binding site" evidence="1">
    <location>
        <begin position="274"/>
        <end position="279"/>
    </location>
    <ligand>
        <name>UDP-alpha-D-glucose</name>
        <dbReference type="ChEBI" id="CHEBI:58885"/>
    </ligand>
</feature>
<feature type="site" description="Interaction with the consensus sequence C-X-S-X-[PA]-C in peptide substrates" evidence="1">
    <location>
        <position position="132"/>
    </location>
</feature>
<feature type="site" description="Interaction with the consensus sequence C-X-S-X-[PA]-C in peptide substrates" evidence="1">
    <location>
        <position position="240"/>
    </location>
</feature>
<feature type="glycosylation site" description="N-linked (GlcNAc...) asparagine" evidence="3">
    <location>
        <position position="53"/>
    </location>
</feature>
<feature type="glycosylation site" description="N-linked (GlcNAc...) asparagine" evidence="3">
    <location>
        <position position="204"/>
    </location>
</feature>
<feature type="glycosylation site" description="N-linked (GlcNAc...) asparagine" evidence="3">
    <location>
        <position position="373"/>
    </location>
</feature>
<feature type="disulfide bond" evidence="1">
    <location>
        <begin position="49"/>
        <end position="56"/>
    </location>
</feature>
<feature type="disulfide bond" evidence="1">
    <location>
        <begin position="54"/>
        <end position="357"/>
    </location>
</feature>
<feature type="disulfide bond" evidence="1">
    <location>
        <begin position="102"/>
        <end position="108"/>
    </location>
</feature>
<feature type="disulfide bond" evidence="1">
    <location>
        <begin position="263"/>
        <end position="286"/>
    </location>
</feature>
<feature type="mutagenesis site" description="Significantly more secreted than wild-type." evidence="6">
    <location>
        <begin position="389"/>
        <end position="392"/>
    </location>
</feature>
<feature type="sequence conflict" description="In Ref. 1; BAC30905." evidence="10" ref="1">
    <original>N</original>
    <variation>S</variation>
    <location>
        <position position="53"/>
    </location>
</feature>
<protein>
    <recommendedName>
        <fullName evidence="10">Protein O-glucosyltransferase 1</fullName>
        <ecNumber evidence="6 7">2.4.1.376</ecNumber>
    </recommendedName>
    <alternativeName>
        <fullName>CAP10-like 46 kDa protein</fullName>
    </alternativeName>
    <alternativeName>
        <fullName>KTEL motif-containing protein 1</fullName>
    </alternativeName>
    <alternativeName>
        <fullName evidence="8">O-glucosyltransferase Rumi homolog</fullName>
        <shortName evidence="8">Rumi</shortName>
    </alternativeName>
    <alternativeName>
        <fullName>Protein O-xylosyltransferase POGLUT1</fullName>
        <ecNumber evidence="6">2.4.2.63</ecNumber>
    </alternativeName>
    <alternativeName>
        <fullName evidence="9">Wing-shaped neural plate protein</fullName>
        <shortName evidence="9">Wsnp</shortName>
    </alternativeName>
</protein>
<name>PGLT1_MOUSE</name>
<sequence>MERRAGSRLRAWMLLLLLCPVQGRQKDSGSKWKVFLDQINRALENYEPCSSQNCSCYHGVIEEDLTPFRGGISRKMMAEVVRRKLGTHYQIIKNRLFREDDCMFPSRCSGVEHFILEVIHRLPDMEMVINVRDYPQVPKWMEPTIPVFSFSKTSEYHDIMYPAWTFWEGGPAVWPLYPTGLGRWDLFREDLLRSAAQWPWEKKNSTAYFRGSRTSPERDPLILLSRKNPKLVDAEYTKNQAWKSMKDTLGKPAAKDVHLIDHCKYRYLFNFRGVAASFRFKHLFLCGSLVFHVGDEWVEFFYPQLKPWVHYIPVKTDLSNVQELLQFVKANDDIAQEIAKRGSQFIINHLQMDDITCYWENLLTDYSKFLSYNVTRRKDYYQIVPRRLKTEL</sequence>
<reference key="1">
    <citation type="journal article" date="2005" name="Science">
        <title>The transcriptional landscape of the mammalian genome.</title>
        <authorList>
            <person name="Carninci P."/>
            <person name="Kasukawa T."/>
            <person name="Katayama S."/>
            <person name="Gough J."/>
            <person name="Frith M.C."/>
            <person name="Maeda N."/>
            <person name="Oyama R."/>
            <person name="Ravasi T."/>
            <person name="Lenhard B."/>
            <person name="Wells C."/>
            <person name="Kodzius R."/>
            <person name="Shimokawa K."/>
            <person name="Bajic V.B."/>
            <person name="Brenner S.E."/>
            <person name="Batalov S."/>
            <person name="Forrest A.R."/>
            <person name="Zavolan M."/>
            <person name="Davis M.J."/>
            <person name="Wilming L.G."/>
            <person name="Aidinis V."/>
            <person name="Allen J.E."/>
            <person name="Ambesi-Impiombato A."/>
            <person name="Apweiler R."/>
            <person name="Aturaliya R.N."/>
            <person name="Bailey T.L."/>
            <person name="Bansal M."/>
            <person name="Baxter L."/>
            <person name="Beisel K.W."/>
            <person name="Bersano T."/>
            <person name="Bono H."/>
            <person name="Chalk A.M."/>
            <person name="Chiu K.P."/>
            <person name="Choudhary V."/>
            <person name="Christoffels A."/>
            <person name="Clutterbuck D.R."/>
            <person name="Crowe M.L."/>
            <person name="Dalla E."/>
            <person name="Dalrymple B.P."/>
            <person name="de Bono B."/>
            <person name="Della Gatta G."/>
            <person name="di Bernardo D."/>
            <person name="Down T."/>
            <person name="Engstrom P."/>
            <person name="Fagiolini M."/>
            <person name="Faulkner G."/>
            <person name="Fletcher C.F."/>
            <person name="Fukushima T."/>
            <person name="Furuno M."/>
            <person name="Futaki S."/>
            <person name="Gariboldi M."/>
            <person name="Georgii-Hemming P."/>
            <person name="Gingeras T.R."/>
            <person name="Gojobori T."/>
            <person name="Green R.E."/>
            <person name="Gustincich S."/>
            <person name="Harbers M."/>
            <person name="Hayashi Y."/>
            <person name="Hensch T.K."/>
            <person name="Hirokawa N."/>
            <person name="Hill D."/>
            <person name="Huminiecki L."/>
            <person name="Iacono M."/>
            <person name="Ikeo K."/>
            <person name="Iwama A."/>
            <person name="Ishikawa T."/>
            <person name="Jakt M."/>
            <person name="Kanapin A."/>
            <person name="Katoh M."/>
            <person name="Kawasawa Y."/>
            <person name="Kelso J."/>
            <person name="Kitamura H."/>
            <person name="Kitano H."/>
            <person name="Kollias G."/>
            <person name="Krishnan S.P."/>
            <person name="Kruger A."/>
            <person name="Kummerfeld S.K."/>
            <person name="Kurochkin I.V."/>
            <person name="Lareau L.F."/>
            <person name="Lazarevic D."/>
            <person name="Lipovich L."/>
            <person name="Liu J."/>
            <person name="Liuni S."/>
            <person name="McWilliam S."/>
            <person name="Madan Babu M."/>
            <person name="Madera M."/>
            <person name="Marchionni L."/>
            <person name="Matsuda H."/>
            <person name="Matsuzawa S."/>
            <person name="Miki H."/>
            <person name="Mignone F."/>
            <person name="Miyake S."/>
            <person name="Morris K."/>
            <person name="Mottagui-Tabar S."/>
            <person name="Mulder N."/>
            <person name="Nakano N."/>
            <person name="Nakauchi H."/>
            <person name="Ng P."/>
            <person name="Nilsson R."/>
            <person name="Nishiguchi S."/>
            <person name="Nishikawa S."/>
            <person name="Nori F."/>
            <person name="Ohara O."/>
            <person name="Okazaki Y."/>
            <person name="Orlando V."/>
            <person name="Pang K.C."/>
            <person name="Pavan W.J."/>
            <person name="Pavesi G."/>
            <person name="Pesole G."/>
            <person name="Petrovsky N."/>
            <person name="Piazza S."/>
            <person name="Reed J."/>
            <person name="Reid J.F."/>
            <person name="Ring B.Z."/>
            <person name="Ringwald M."/>
            <person name="Rost B."/>
            <person name="Ruan Y."/>
            <person name="Salzberg S.L."/>
            <person name="Sandelin A."/>
            <person name="Schneider C."/>
            <person name="Schoenbach C."/>
            <person name="Sekiguchi K."/>
            <person name="Semple C.A."/>
            <person name="Seno S."/>
            <person name="Sessa L."/>
            <person name="Sheng Y."/>
            <person name="Shibata Y."/>
            <person name="Shimada H."/>
            <person name="Shimada K."/>
            <person name="Silva D."/>
            <person name="Sinclair B."/>
            <person name="Sperling S."/>
            <person name="Stupka E."/>
            <person name="Sugiura K."/>
            <person name="Sultana R."/>
            <person name="Takenaka Y."/>
            <person name="Taki K."/>
            <person name="Tammoja K."/>
            <person name="Tan S.L."/>
            <person name="Tang S."/>
            <person name="Taylor M.S."/>
            <person name="Tegner J."/>
            <person name="Teichmann S.A."/>
            <person name="Ueda H.R."/>
            <person name="van Nimwegen E."/>
            <person name="Verardo R."/>
            <person name="Wei C.L."/>
            <person name="Yagi K."/>
            <person name="Yamanishi H."/>
            <person name="Zabarovsky E."/>
            <person name="Zhu S."/>
            <person name="Zimmer A."/>
            <person name="Hide W."/>
            <person name="Bult C."/>
            <person name="Grimmond S.M."/>
            <person name="Teasdale R.D."/>
            <person name="Liu E.T."/>
            <person name="Brusic V."/>
            <person name="Quackenbush J."/>
            <person name="Wahlestedt C."/>
            <person name="Mattick J.S."/>
            <person name="Hume D.A."/>
            <person name="Kai C."/>
            <person name="Sasaki D."/>
            <person name="Tomaru Y."/>
            <person name="Fukuda S."/>
            <person name="Kanamori-Katayama M."/>
            <person name="Suzuki M."/>
            <person name="Aoki J."/>
            <person name="Arakawa T."/>
            <person name="Iida J."/>
            <person name="Imamura K."/>
            <person name="Itoh M."/>
            <person name="Kato T."/>
            <person name="Kawaji H."/>
            <person name="Kawagashira N."/>
            <person name="Kawashima T."/>
            <person name="Kojima M."/>
            <person name="Kondo S."/>
            <person name="Konno H."/>
            <person name="Nakano K."/>
            <person name="Ninomiya N."/>
            <person name="Nishio T."/>
            <person name="Okada M."/>
            <person name="Plessy C."/>
            <person name="Shibata K."/>
            <person name="Shiraki T."/>
            <person name="Suzuki S."/>
            <person name="Tagami M."/>
            <person name="Waki K."/>
            <person name="Watahiki A."/>
            <person name="Okamura-Oho Y."/>
            <person name="Suzuki H."/>
            <person name="Kawai J."/>
            <person name="Hayashizaki Y."/>
        </authorList>
    </citation>
    <scope>NUCLEOTIDE SEQUENCE [LARGE SCALE MRNA]</scope>
    <source>
        <strain>C57BL/6J</strain>
        <tissue>Cerebellum</tissue>
        <tissue>Testis</tissue>
        <tissue>Thymus</tissue>
    </source>
</reference>
<reference key="2">
    <citation type="journal article" date="2004" name="Genome Res.">
        <title>The status, quality, and expansion of the NIH full-length cDNA project: the Mammalian Gene Collection (MGC).</title>
        <authorList>
            <consortium name="The MGC Project Team"/>
        </authorList>
    </citation>
    <scope>NUCLEOTIDE SEQUENCE [LARGE SCALE MRNA]</scope>
    <source>
        <strain>FVB/N</strain>
        <tissue>Colon</tissue>
    </source>
</reference>
<reference key="3">
    <citation type="journal article" date="2010" name="Cell">
        <title>A tissue-specific atlas of mouse protein phosphorylation and expression.</title>
        <authorList>
            <person name="Huttlin E.L."/>
            <person name="Jedrychowski M.P."/>
            <person name="Elias J.E."/>
            <person name="Goswami T."/>
            <person name="Rad R."/>
            <person name="Beausoleil S.A."/>
            <person name="Villen J."/>
            <person name="Haas W."/>
            <person name="Sowa M.E."/>
            <person name="Gygi S.P."/>
        </authorList>
    </citation>
    <scope>IDENTIFICATION BY MASS SPECTROMETRY [LARGE SCALE ANALYSIS]</scope>
    <source>
        <tissue>Brain</tissue>
        <tissue>Lung</tissue>
        <tissue>Spleen</tissue>
        <tissue>Testis</tissue>
    </source>
</reference>
<reference key="4">
    <citation type="journal article" date="2011" name="Development">
        <title>Regulation of mammalian Notch signaling and embryonic development by the protein O-glucosyltransferase Rumi.</title>
        <authorList>
            <person name="Fernandez-Valdivia R."/>
            <person name="Takeuchi H."/>
            <person name="Samarghandi A."/>
            <person name="Lopez M."/>
            <person name="Leonardi J."/>
            <person name="Haltiwanger R.S."/>
            <person name="Jafar-Nejad H."/>
        </authorList>
    </citation>
    <scope>TISSUE SPECIFICITY</scope>
    <scope>DISRUPTION PHENOTYPE</scope>
</reference>
<reference key="5">
    <citation type="journal article" date="2011" name="Proc. Natl. Acad. Sci. U.S.A.">
        <title>Rumi functions as both a protein O-glucosyltransferase and a protein O-xylosyltransferase.</title>
        <authorList>
            <person name="Takeuchi H."/>
            <person name="Fernandez-Valdivia R.C."/>
            <person name="Caswell D.S."/>
            <person name="Nita-Lazar A."/>
            <person name="Rana N.A."/>
            <person name="Garner T.P."/>
            <person name="Weldeghiorghis T.K."/>
            <person name="Macnaughtan M.A."/>
            <person name="Jafar-Nejad H."/>
            <person name="Haltiwanger R.S."/>
        </authorList>
    </citation>
    <scope>FUNCTION</scope>
    <scope>CATALYTIC ACTIVITY</scope>
    <scope>MUTAGENESIS OF 389-LYS--LEU-392</scope>
</reference>
<reference key="6">
    <citation type="journal article" date="2015" name="PLoS Genet.">
        <title>Protein O-glucosyltransferase 1 (POGLUT1) promotes mouse gastrulation through modification of the apical polarity protein CRUMBS2.</title>
        <authorList>
            <person name="Ramkumar N."/>
            <person name="Harvey B.M."/>
            <person name="Lee J.D."/>
            <person name="Alcorn H.L."/>
            <person name="Silva-Gagliardi N.F."/>
            <person name="McGlade C.J."/>
            <person name="Bestor T.H."/>
            <person name="Wijnholds J."/>
            <person name="Haltiwanger R.S."/>
            <person name="Anderson K.V."/>
        </authorList>
    </citation>
    <scope>FUNCTION</scope>
    <scope>DISRUPTION PHENOTYPE</scope>
    <scope>TISSUE SPECIFICITY</scope>
</reference>
<dbReference type="EC" id="2.4.1.376" evidence="6 7"/>
<dbReference type="EC" id="2.4.2.63" evidence="6"/>
<dbReference type="EMBL" id="AK031608">
    <property type="protein sequence ID" value="BAC27475.1"/>
    <property type="molecule type" value="mRNA"/>
</dbReference>
<dbReference type="EMBL" id="AK035948">
    <property type="protein sequence ID" value="BAC29255.1"/>
    <property type="molecule type" value="mRNA"/>
</dbReference>
<dbReference type="EMBL" id="AK036224">
    <property type="protein sequence ID" value="BAC29351.1"/>
    <property type="molecule type" value="mRNA"/>
</dbReference>
<dbReference type="EMBL" id="AK041321">
    <property type="protein sequence ID" value="BAC30905.1"/>
    <property type="molecule type" value="mRNA"/>
</dbReference>
<dbReference type="EMBL" id="BC026809">
    <property type="protein sequence ID" value="AAH26809.1"/>
    <property type="molecule type" value="mRNA"/>
</dbReference>
<dbReference type="CCDS" id="CCDS28170.1"/>
<dbReference type="RefSeq" id="NP_759012.1">
    <property type="nucleotide sequence ID" value="NM_172380.4"/>
</dbReference>
<dbReference type="SMR" id="Q8BYB9"/>
<dbReference type="BioGRID" id="230254">
    <property type="interactions" value="3"/>
</dbReference>
<dbReference type="FunCoup" id="Q8BYB9">
    <property type="interactions" value="3357"/>
</dbReference>
<dbReference type="STRING" id="10090.ENSMUSP00000038166"/>
<dbReference type="CAZy" id="GT90">
    <property type="family name" value="Glycosyltransferase Family 90"/>
</dbReference>
<dbReference type="GlyConnect" id="2636">
    <property type="glycosylation" value="6 N-Linked glycans (2 sites)"/>
</dbReference>
<dbReference type="GlyCosmos" id="Q8BYB9">
    <property type="glycosylation" value="3 sites, 6 glycans"/>
</dbReference>
<dbReference type="GlyGen" id="Q8BYB9">
    <property type="glycosylation" value="3 sites, 8 N-linked glycans (3 sites)"/>
</dbReference>
<dbReference type="iPTMnet" id="Q8BYB9"/>
<dbReference type="PhosphoSitePlus" id="Q8BYB9"/>
<dbReference type="SwissPalm" id="Q8BYB9"/>
<dbReference type="PaxDb" id="10090-ENSMUSP00000038166"/>
<dbReference type="PeptideAtlas" id="Q8BYB9"/>
<dbReference type="ProteomicsDB" id="289475"/>
<dbReference type="Pumba" id="Q8BYB9"/>
<dbReference type="Antibodypedia" id="49938">
    <property type="antibodies" value="103 antibodies from 24 providers"/>
</dbReference>
<dbReference type="DNASU" id="224143"/>
<dbReference type="Ensembl" id="ENSMUST00000036210.7">
    <property type="protein sequence ID" value="ENSMUSP00000038166.7"/>
    <property type="gene ID" value="ENSMUSG00000034064.15"/>
</dbReference>
<dbReference type="GeneID" id="224143"/>
<dbReference type="KEGG" id="mmu:224143"/>
<dbReference type="UCSC" id="uc007zfc.2">
    <property type="organism name" value="mouse"/>
</dbReference>
<dbReference type="AGR" id="MGI:2444232"/>
<dbReference type="CTD" id="56983"/>
<dbReference type="MGI" id="MGI:2444232">
    <property type="gene designation" value="Poglut1"/>
</dbReference>
<dbReference type="VEuPathDB" id="HostDB:ENSMUSG00000034064"/>
<dbReference type="eggNOG" id="KOG2458">
    <property type="taxonomic scope" value="Eukaryota"/>
</dbReference>
<dbReference type="GeneTree" id="ENSGT00940000158283"/>
<dbReference type="HOGENOM" id="CLU_041919_1_0_1"/>
<dbReference type="InParanoid" id="Q8BYB9"/>
<dbReference type="OMA" id="EDDCMFP"/>
<dbReference type="OrthoDB" id="202415at2759"/>
<dbReference type="PhylomeDB" id="Q8BYB9"/>
<dbReference type="TreeFam" id="TF323280"/>
<dbReference type="UniPathway" id="UPA00378"/>
<dbReference type="BioGRID-ORCS" id="224143">
    <property type="hits" value="1 hit in 74 CRISPR screens"/>
</dbReference>
<dbReference type="ChiTaRS" id="Poglut1">
    <property type="organism name" value="mouse"/>
</dbReference>
<dbReference type="PRO" id="PR:Q8BYB9"/>
<dbReference type="Proteomes" id="UP000000589">
    <property type="component" value="Chromosome 16"/>
</dbReference>
<dbReference type="RNAct" id="Q8BYB9">
    <property type="molecule type" value="protein"/>
</dbReference>
<dbReference type="Bgee" id="ENSMUSG00000034064">
    <property type="expression patterns" value="Expressed in humerus cartilage element and 244 other cell types or tissues"/>
</dbReference>
<dbReference type="GO" id="GO:0005788">
    <property type="term" value="C:endoplasmic reticulum lumen"/>
    <property type="evidence" value="ECO:0000250"/>
    <property type="project" value="UniProtKB"/>
</dbReference>
<dbReference type="GO" id="GO:0140561">
    <property type="term" value="F:EGF-domain serine glucosyltransferase activity"/>
    <property type="evidence" value="ECO:0007669"/>
    <property type="project" value="UniProtKB-EC"/>
</dbReference>
<dbReference type="GO" id="GO:0140562">
    <property type="term" value="F:EGF-domain serine xylosyltransferase activity"/>
    <property type="evidence" value="ECO:0007669"/>
    <property type="project" value="UniProtKB-EC"/>
</dbReference>
<dbReference type="GO" id="GO:0046527">
    <property type="term" value="F:glucosyltransferase activity"/>
    <property type="evidence" value="ECO:0000315"/>
    <property type="project" value="MGI"/>
</dbReference>
<dbReference type="GO" id="GO:0035251">
    <property type="term" value="F:UDP-glucosyltransferase activity"/>
    <property type="evidence" value="ECO:0000314"/>
    <property type="project" value="UniProtKB"/>
</dbReference>
<dbReference type="GO" id="GO:0035252">
    <property type="term" value="F:UDP-xylosyltransferase activity"/>
    <property type="evidence" value="ECO:0000314"/>
    <property type="project" value="MGI"/>
</dbReference>
<dbReference type="GO" id="GO:0048318">
    <property type="term" value="P:axial mesoderm development"/>
    <property type="evidence" value="ECO:0000315"/>
    <property type="project" value="MGI"/>
</dbReference>
<dbReference type="GO" id="GO:0072359">
    <property type="term" value="P:circulatory system development"/>
    <property type="evidence" value="ECO:0000315"/>
    <property type="project" value="MGI"/>
</dbReference>
<dbReference type="GO" id="GO:0007369">
    <property type="term" value="P:gastrulation"/>
    <property type="evidence" value="ECO:0007669"/>
    <property type="project" value="UniProtKB-KW"/>
</dbReference>
<dbReference type="GO" id="GO:0060537">
    <property type="term" value="P:muscle tissue development"/>
    <property type="evidence" value="ECO:0000250"/>
    <property type="project" value="UniProtKB"/>
</dbReference>
<dbReference type="GO" id="GO:0048339">
    <property type="term" value="P:paraxial mesoderm development"/>
    <property type="evidence" value="ECO:0000315"/>
    <property type="project" value="MGI"/>
</dbReference>
<dbReference type="GO" id="GO:0045747">
    <property type="term" value="P:positive regulation of Notch signaling pathway"/>
    <property type="evidence" value="ECO:0000315"/>
    <property type="project" value="UniProtKB"/>
</dbReference>
<dbReference type="GO" id="GO:0006493">
    <property type="term" value="P:protein O-linked glycosylation"/>
    <property type="evidence" value="ECO:0000315"/>
    <property type="project" value="MGI"/>
</dbReference>
<dbReference type="GO" id="GO:0018242">
    <property type="term" value="P:protein O-linked glycosylation via serine"/>
    <property type="evidence" value="ECO:0000315"/>
    <property type="project" value="UniProtKB"/>
</dbReference>
<dbReference type="GO" id="GO:0010470">
    <property type="term" value="P:regulation of gastrulation"/>
    <property type="evidence" value="ECO:0000315"/>
    <property type="project" value="UniProtKB"/>
</dbReference>
<dbReference type="GO" id="GO:0008593">
    <property type="term" value="P:regulation of Notch signaling pathway"/>
    <property type="evidence" value="ECO:0000315"/>
    <property type="project" value="MGI"/>
</dbReference>
<dbReference type="GO" id="GO:0001756">
    <property type="term" value="P:somitogenesis"/>
    <property type="evidence" value="ECO:0000315"/>
    <property type="project" value="MGI"/>
</dbReference>
<dbReference type="InterPro" id="IPR006598">
    <property type="entry name" value="CAP10"/>
</dbReference>
<dbReference type="InterPro" id="IPR051091">
    <property type="entry name" value="O-Glucosyltr/Glycosyltrsf_90"/>
</dbReference>
<dbReference type="PANTHER" id="PTHR12203">
    <property type="entry name" value="KDEL LYS-ASP-GLU-LEU CONTAINING - RELATED"/>
    <property type="match status" value="1"/>
</dbReference>
<dbReference type="PANTHER" id="PTHR12203:SF35">
    <property type="entry name" value="PROTEIN O-GLUCOSYLTRANSFERASE 1"/>
    <property type="match status" value="1"/>
</dbReference>
<dbReference type="Pfam" id="PF05686">
    <property type="entry name" value="Glyco_transf_90"/>
    <property type="match status" value="1"/>
</dbReference>
<dbReference type="SMART" id="SM00672">
    <property type="entry name" value="CAP10"/>
    <property type="match status" value="1"/>
</dbReference>
<proteinExistence type="evidence at protein level"/>
<accession>Q8BYB9</accession>
<accession>Q8R0H7</accession>